<protein>
    <recommendedName>
        <fullName evidence="6">Progestin and adipoQ receptor family member 4</fullName>
    </recommendedName>
    <alternativeName>
        <fullName>Progestin and adipoQ receptor family member IV</fullName>
    </alternativeName>
</protein>
<comment type="function">
    <text evidence="3 4 8">Plays a role in maintaining adipose tissue function through the regulation of ceramide levels (PubMed:32291319, PubMed:38961186). Mediates the stability of ceramide synthetases, CERS2 and CERS5, and their activities (Probable).</text>
</comment>
<comment type="subunit">
    <text evidence="4">Interacts with CERS2 and CERS5; the interaction regulates CERS2 and CERS5 stabilities and activities and is inhibited in presence of ceramides.</text>
</comment>
<comment type="subcellular location">
    <subcellularLocation>
        <location evidence="3">Golgi apparatus membrane</location>
        <topology evidence="1">Multi-pass membrane protein</topology>
    </subcellularLocation>
</comment>
<comment type="alternative products">
    <event type="alternative splicing"/>
    <isoform>
        <id>Q8N4S7-1</id>
        <name>1</name>
        <sequence type="displayed"/>
    </isoform>
    <isoform>
        <id>Q8N4S7-2</id>
        <name>2</name>
        <sequence type="described" ref="VSP_011481"/>
    </isoform>
    <isoform>
        <id>Q8N4S7-3</id>
        <name>3</name>
        <sequence type="described" ref="VSP_011482"/>
    </isoform>
</comment>
<comment type="tissue specificity">
    <text evidence="2 4">Relatively widely expressed in a range of tissues. Expressed in subcutaneous white adipose tissue (PubMed:38961186).</text>
</comment>
<comment type="induction">
    <text evidence="4">Expression is up-regulated in subcutaneous white adipose tissue of obese individuals.</text>
</comment>
<comment type="similarity">
    <text evidence="7">Belongs to the ADIPOR family.</text>
</comment>
<comment type="caution">
    <text evidence="3 4">Seems to not act as a 'classical' recpetor. Initially described as a ceramidase, recent evidence disputes this direct ceramidase activity. Instead, it suggests that PAQR4 regulates ceramide levels through its interaction with ceramide synthetases.</text>
</comment>
<name>PAQR4_HUMAN</name>
<reference key="1">
    <citation type="journal article" date="2005" name="J. Mol. Evol.">
        <title>PAQR proteins: a novel membrane receptor family defined by an ancient 7-transmembrane pass motif.</title>
        <authorList>
            <person name="Tang Y.T."/>
            <person name="Hu T."/>
            <person name="Arterburn M."/>
            <person name="Boyle B."/>
            <person name="Bright J.M."/>
            <person name="Emtage P.C."/>
            <person name="Funk W.D."/>
        </authorList>
    </citation>
    <scope>NUCLEOTIDE SEQUENCE [MRNA] (ISOFORM 1)</scope>
    <scope>TISSUE SPECIFICITY</scope>
</reference>
<reference key="2">
    <citation type="journal article" date="2004" name="Nat. Genet.">
        <title>Complete sequencing and characterization of 21,243 full-length human cDNAs.</title>
        <authorList>
            <person name="Ota T."/>
            <person name="Suzuki Y."/>
            <person name="Nishikawa T."/>
            <person name="Otsuki T."/>
            <person name="Sugiyama T."/>
            <person name="Irie R."/>
            <person name="Wakamatsu A."/>
            <person name="Hayashi K."/>
            <person name="Sato H."/>
            <person name="Nagai K."/>
            <person name="Kimura K."/>
            <person name="Makita H."/>
            <person name="Sekine M."/>
            <person name="Obayashi M."/>
            <person name="Nishi T."/>
            <person name="Shibahara T."/>
            <person name="Tanaka T."/>
            <person name="Ishii S."/>
            <person name="Yamamoto J."/>
            <person name="Saito K."/>
            <person name="Kawai Y."/>
            <person name="Isono Y."/>
            <person name="Nakamura Y."/>
            <person name="Nagahari K."/>
            <person name="Murakami K."/>
            <person name="Yasuda T."/>
            <person name="Iwayanagi T."/>
            <person name="Wagatsuma M."/>
            <person name="Shiratori A."/>
            <person name="Sudo H."/>
            <person name="Hosoiri T."/>
            <person name="Kaku Y."/>
            <person name="Kodaira H."/>
            <person name="Kondo H."/>
            <person name="Sugawara M."/>
            <person name="Takahashi M."/>
            <person name="Kanda K."/>
            <person name="Yokoi T."/>
            <person name="Furuya T."/>
            <person name="Kikkawa E."/>
            <person name="Omura Y."/>
            <person name="Abe K."/>
            <person name="Kamihara K."/>
            <person name="Katsuta N."/>
            <person name="Sato K."/>
            <person name="Tanikawa M."/>
            <person name="Yamazaki M."/>
            <person name="Ninomiya K."/>
            <person name="Ishibashi T."/>
            <person name="Yamashita H."/>
            <person name="Murakawa K."/>
            <person name="Fujimori K."/>
            <person name="Tanai H."/>
            <person name="Kimata M."/>
            <person name="Watanabe M."/>
            <person name="Hiraoka S."/>
            <person name="Chiba Y."/>
            <person name="Ishida S."/>
            <person name="Ono Y."/>
            <person name="Takiguchi S."/>
            <person name="Watanabe S."/>
            <person name="Yosida M."/>
            <person name="Hotuta T."/>
            <person name="Kusano J."/>
            <person name="Kanehori K."/>
            <person name="Takahashi-Fujii A."/>
            <person name="Hara H."/>
            <person name="Tanase T.-O."/>
            <person name="Nomura Y."/>
            <person name="Togiya S."/>
            <person name="Komai F."/>
            <person name="Hara R."/>
            <person name="Takeuchi K."/>
            <person name="Arita M."/>
            <person name="Imose N."/>
            <person name="Musashino K."/>
            <person name="Yuuki H."/>
            <person name="Oshima A."/>
            <person name="Sasaki N."/>
            <person name="Aotsuka S."/>
            <person name="Yoshikawa Y."/>
            <person name="Matsunawa H."/>
            <person name="Ichihara T."/>
            <person name="Shiohata N."/>
            <person name="Sano S."/>
            <person name="Moriya S."/>
            <person name="Momiyama H."/>
            <person name="Satoh N."/>
            <person name="Takami S."/>
            <person name="Terashima Y."/>
            <person name="Suzuki O."/>
            <person name="Nakagawa S."/>
            <person name="Senoh A."/>
            <person name="Mizoguchi H."/>
            <person name="Goto Y."/>
            <person name="Shimizu F."/>
            <person name="Wakebe H."/>
            <person name="Hishigaki H."/>
            <person name="Watanabe T."/>
            <person name="Sugiyama A."/>
            <person name="Takemoto M."/>
            <person name="Kawakami B."/>
            <person name="Yamazaki M."/>
            <person name="Watanabe K."/>
            <person name="Kumagai A."/>
            <person name="Itakura S."/>
            <person name="Fukuzumi Y."/>
            <person name="Fujimori Y."/>
            <person name="Komiyama M."/>
            <person name="Tashiro H."/>
            <person name="Tanigami A."/>
            <person name="Fujiwara T."/>
            <person name="Ono T."/>
            <person name="Yamada K."/>
            <person name="Fujii Y."/>
            <person name="Ozaki K."/>
            <person name="Hirao M."/>
            <person name="Ohmori Y."/>
            <person name="Kawabata A."/>
            <person name="Hikiji T."/>
            <person name="Kobatake N."/>
            <person name="Inagaki H."/>
            <person name="Ikema Y."/>
            <person name="Okamoto S."/>
            <person name="Okitani R."/>
            <person name="Kawakami T."/>
            <person name="Noguchi S."/>
            <person name="Itoh T."/>
            <person name="Shigeta K."/>
            <person name="Senba T."/>
            <person name="Matsumura K."/>
            <person name="Nakajima Y."/>
            <person name="Mizuno T."/>
            <person name="Morinaga M."/>
            <person name="Sasaki M."/>
            <person name="Togashi T."/>
            <person name="Oyama M."/>
            <person name="Hata H."/>
            <person name="Watanabe M."/>
            <person name="Komatsu T."/>
            <person name="Mizushima-Sugano J."/>
            <person name="Satoh T."/>
            <person name="Shirai Y."/>
            <person name="Takahashi Y."/>
            <person name="Nakagawa K."/>
            <person name="Okumura K."/>
            <person name="Nagase T."/>
            <person name="Nomura N."/>
            <person name="Kikuchi H."/>
            <person name="Masuho Y."/>
            <person name="Yamashita R."/>
            <person name="Nakai K."/>
            <person name="Yada T."/>
            <person name="Nakamura Y."/>
            <person name="Ohara O."/>
            <person name="Isogai T."/>
            <person name="Sugano S."/>
        </authorList>
    </citation>
    <scope>NUCLEOTIDE SEQUENCE [LARGE SCALE MRNA] (ISOFORMS 1; 2 AND 3)</scope>
    <source>
        <tissue>Brain</tissue>
        <tissue>Neuroblastoma</tissue>
        <tissue>Teratocarcinoma</tissue>
    </source>
</reference>
<reference key="3">
    <citation type="submission" date="2005-09" db="EMBL/GenBank/DDBJ databases">
        <authorList>
            <person name="Mural R.J."/>
            <person name="Istrail S."/>
            <person name="Sutton G.G."/>
            <person name="Florea L."/>
            <person name="Halpern A.L."/>
            <person name="Mobarry C.M."/>
            <person name="Lippert R."/>
            <person name="Walenz B."/>
            <person name="Shatkay H."/>
            <person name="Dew I."/>
            <person name="Miller J.R."/>
            <person name="Flanigan M.J."/>
            <person name="Edwards N.J."/>
            <person name="Bolanos R."/>
            <person name="Fasulo D."/>
            <person name="Halldorsson B.V."/>
            <person name="Hannenhalli S."/>
            <person name="Turner R."/>
            <person name="Yooseph S."/>
            <person name="Lu F."/>
            <person name="Nusskern D.R."/>
            <person name="Shue B.C."/>
            <person name="Zheng X.H."/>
            <person name="Zhong F."/>
            <person name="Delcher A.L."/>
            <person name="Huson D.H."/>
            <person name="Kravitz S.A."/>
            <person name="Mouchard L."/>
            <person name="Reinert K."/>
            <person name="Remington K.A."/>
            <person name="Clark A.G."/>
            <person name="Waterman M.S."/>
            <person name="Eichler E.E."/>
            <person name="Adams M.D."/>
            <person name="Hunkapiller M.W."/>
            <person name="Myers E.W."/>
            <person name="Venter J.C."/>
        </authorList>
    </citation>
    <scope>NUCLEOTIDE SEQUENCE [LARGE SCALE GENOMIC DNA]</scope>
</reference>
<reference key="4">
    <citation type="journal article" date="2004" name="Genome Res.">
        <title>The status, quality, and expansion of the NIH full-length cDNA project: the Mammalian Gene Collection (MGC).</title>
        <authorList>
            <consortium name="The MGC Project Team"/>
        </authorList>
    </citation>
    <scope>NUCLEOTIDE SEQUENCE [LARGE SCALE MRNA] (ISOFORM 1)</scope>
    <source>
        <tissue>Brain</tissue>
    </source>
</reference>
<reference key="5">
    <citation type="journal article" date="2020" name="Cancer Res.">
        <title>Golgi-Localized PAQR4 Mediates Antiapoptotic Ceramidase Activity in Breast Cancer.</title>
        <authorList>
            <person name="Pedersen L."/>
            <person name="Panahandeh P."/>
            <person name="Siraji M.I."/>
            <person name="Knappskog S."/>
            <person name="Loenning P.E."/>
            <person name="Gordillo R."/>
            <person name="Scherer P.E."/>
            <person name="Molven A."/>
            <person name="Teigen K."/>
            <person name="Halberg N."/>
        </authorList>
    </citation>
    <scope>FUNCTION</scope>
    <scope>CAUTION</scope>
    <scope>SUBCELLULAR LOCATION</scope>
</reference>
<reference key="6">
    <citation type="journal article" date="2024" name="Nat. Metab.">
        <title>PAQR4 regulates adipocyte function and systemic metabolic health by mediating ceramide levels.</title>
        <authorList>
            <person name="Zhu Q."/>
            <person name="Chen S."/>
            <person name="Funcke J.B."/>
            <person name="Straub L.G."/>
            <person name="Lin Q."/>
            <person name="Zhao S."/>
            <person name="Joung C."/>
            <person name="Zhang Z."/>
            <person name="Kim D.S."/>
            <person name="Li N."/>
            <person name="Gliniak C.M."/>
            <person name="Lee C."/>
            <person name="Cebrian-Serrano A."/>
            <person name="Pedersen L."/>
            <person name="Halberg N."/>
            <person name="Gordillo R."/>
            <person name="Kusminski C.M."/>
            <person name="Scherer P.E."/>
        </authorList>
    </citation>
    <scope>INDUCTION BY OBESITY</scope>
    <scope>TISSUE SPECIFICITY</scope>
    <scope>INTERACTION WITH CERS2 AND CERS5</scope>
</reference>
<gene>
    <name evidence="9" type="primary">PAQR4</name>
</gene>
<sequence>MAFLAGPRLLDWASSPPHLQFNKFVLTGYRPASSGSGCLRSLFYLHNELGNIYTHGLALLGFLVLVPMTMPWGQLGKDGWLGGTHCVACLAPPAGSVLYHLFMCHQGGSAVYARLLALDMCGVCLVNTLGALPIIHCTLACRPWLRPAALVGYTVLSGVAGWRALTAPSTSARLRAFGWQAAARLLVFGARGVGLGSGAPGSLPCYLRMDALALLGGLVNVARLPERWGPGRFDYWGNSHQIMHLLSVGSILQLHAGVVPDLLWAAHHACPRD</sequence>
<evidence type="ECO:0000255" key="1"/>
<evidence type="ECO:0000269" key="2">
    <source>
    </source>
</evidence>
<evidence type="ECO:0000269" key="3">
    <source>
    </source>
</evidence>
<evidence type="ECO:0000269" key="4">
    <source>
    </source>
</evidence>
<evidence type="ECO:0000303" key="5">
    <source>
    </source>
</evidence>
<evidence type="ECO:0000303" key="6">
    <source>
    </source>
</evidence>
<evidence type="ECO:0000305" key="7"/>
<evidence type="ECO:0000305" key="8">
    <source>
    </source>
</evidence>
<evidence type="ECO:0000312" key="9">
    <source>
        <dbReference type="HGNC" id="HGNC:26386"/>
    </source>
</evidence>
<organism>
    <name type="scientific">Homo sapiens</name>
    <name type="common">Human</name>
    <dbReference type="NCBI Taxonomy" id="9606"/>
    <lineage>
        <taxon>Eukaryota</taxon>
        <taxon>Metazoa</taxon>
        <taxon>Chordata</taxon>
        <taxon>Craniata</taxon>
        <taxon>Vertebrata</taxon>
        <taxon>Euteleostomi</taxon>
        <taxon>Mammalia</taxon>
        <taxon>Eutheria</taxon>
        <taxon>Euarchontoglires</taxon>
        <taxon>Primates</taxon>
        <taxon>Haplorrhini</taxon>
        <taxon>Catarrhini</taxon>
        <taxon>Hominidae</taxon>
        <taxon>Homo</taxon>
    </lineage>
</organism>
<proteinExistence type="evidence at protein level"/>
<dbReference type="EMBL" id="AY424282">
    <property type="protein sequence ID" value="AAR08370.1"/>
    <property type="molecule type" value="mRNA"/>
</dbReference>
<dbReference type="EMBL" id="AK054564">
    <property type="protein sequence ID" value="BAB70758.1"/>
    <property type="molecule type" value="mRNA"/>
</dbReference>
<dbReference type="EMBL" id="AK092173">
    <property type="protein sequence ID" value="BAC03821.1"/>
    <property type="molecule type" value="mRNA"/>
</dbReference>
<dbReference type="EMBL" id="AK291373">
    <property type="protein sequence ID" value="BAF84062.1"/>
    <property type="molecule type" value="mRNA"/>
</dbReference>
<dbReference type="EMBL" id="CH471112">
    <property type="protein sequence ID" value="EAW85441.1"/>
    <property type="molecule type" value="Genomic_DNA"/>
</dbReference>
<dbReference type="EMBL" id="CH471112">
    <property type="protein sequence ID" value="EAW85442.1"/>
    <property type="molecule type" value="Genomic_DNA"/>
</dbReference>
<dbReference type="EMBL" id="CH471112">
    <property type="protein sequence ID" value="EAW85443.1"/>
    <property type="molecule type" value="Genomic_DNA"/>
</dbReference>
<dbReference type="EMBL" id="CH471112">
    <property type="protein sequence ID" value="EAW85444.1"/>
    <property type="molecule type" value="Genomic_DNA"/>
</dbReference>
<dbReference type="EMBL" id="BC033703">
    <property type="protein sequence ID" value="AAH33703.1"/>
    <property type="molecule type" value="mRNA"/>
</dbReference>
<dbReference type="CCDS" id="CCDS10485.1">
    <molecule id="Q8N4S7-1"/>
</dbReference>
<dbReference type="CCDS" id="CCDS66911.1">
    <molecule id="Q8N4S7-2"/>
</dbReference>
<dbReference type="RefSeq" id="NP_001271440.1">
    <molecule id="Q8N4S7-2"/>
    <property type="nucleotide sequence ID" value="NM_001284511.2"/>
</dbReference>
<dbReference type="RefSeq" id="NP_001271441.1">
    <property type="nucleotide sequence ID" value="NM_001284512.1"/>
</dbReference>
<dbReference type="RefSeq" id="NP_689554.2">
    <molecule id="Q8N4S7-1"/>
    <property type="nucleotide sequence ID" value="NM_152341.4"/>
</dbReference>
<dbReference type="SMR" id="Q8N4S7"/>
<dbReference type="BioGRID" id="125857">
    <property type="interactions" value="9"/>
</dbReference>
<dbReference type="FunCoup" id="Q8N4S7">
    <property type="interactions" value="137"/>
</dbReference>
<dbReference type="IntAct" id="Q8N4S7">
    <property type="interactions" value="3"/>
</dbReference>
<dbReference type="STRING" id="9606.ENSP00000321804"/>
<dbReference type="GlyGen" id="Q8N4S7">
    <property type="glycosylation" value="1 site, 1 O-linked glycan (1 site)"/>
</dbReference>
<dbReference type="iPTMnet" id="Q8N4S7"/>
<dbReference type="PhosphoSitePlus" id="Q8N4S7"/>
<dbReference type="BioMuta" id="PAQR4"/>
<dbReference type="DMDM" id="146345478"/>
<dbReference type="jPOST" id="Q8N4S7"/>
<dbReference type="MassIVE" id="Q8N4S7"/>
<dbReference type="PaxDb" id="9606-ENSP00000321804"/>
<dbReference type="PeptideAtlas" id="Q8N4S7"/>
<dbReference type="ProteomicsDB" id="71962">
    <molecule id="Q8N4S7-1"/>
</dbReference>
<dbReference type="ProteomicsDB" id="71963">
    <molecule id="Q8N4S7-2"/>
</dbReference>
<dbReference type="ProteomicsDB" id="71964">
    <molecule id="Q8N4S7-3"/>
</dbReference>
<dbReference type="Antibodypedia" id="42629">
    <property type="antibodies" value="30 antibodies from 13 providers"/>
</dbReference>
<dbReference type="DNASU" id="124222"/>
<dbReference type="Ensembl" id="ENST00000293978.12">
    <molecule id="Q8N4S7-2"/>
    <property type="protein sequence ID" value="ENSP00000293978.8"/>
    <property type="gene ID" value="ENSG00000162073.14"/>
</dbReference>
<dbReference type="Ensembl" id="ENST00000318782.9">
    <molecule id="Q8N4S7-1"/>
    <property type="protein sequence ID" value="ENSP00000321804.8"/>
    <property type="gene ID" value="ENSG00000162073.14"/>
</dbReference>
<dbReference type="GeneID" id="124222"/>
<dbReference type="KEGG" id="hsa:124222"/>
<dbReference type="MANE-Select" id="ENST00000318782.9">
    <property type="protein sequence ID" value="ENSP00000321804.8"/>
    <property type="RefSeq nucleotide sequence ID" value="NM_152341.5"/>
    <property type="RefSeq protein sequence ID" value="NP_689554.2"/>
</dbReference>
<dbReference type="UCSC" id="uc002csj.5">
    <molecule id="Q8N4S7-1"/>
    <property type="organism name" value="human"/>
</dbReference>
<dbReference type="AGR" id="HGNC:26386"/>
<dbReference type="CTD" id="124222"/>
<dbReference type="DisGeNET" id="124222"/>
<dbReference type="GeneCards" id="PAQR4"/>
<dbReference type="HGNC" id="HGNC:26386">
    <property type="gene designation" value="PAQR4"/>
</dbReference>
<dbReference type="HPA" id="ENSG00000162073">
    <property type="expression patterns" value="Tissue enhanced (brain, retina)"/>
</dbReference>
<dbReference type="MIM" id="614578">
    <property type="type" value="gene"/>
</dbReference>
<dbReference type="neXtProt" id="NX_Q8N4S7"/>
<dbReference type="OpenTargets" id="ENSG00000162073"/>
<dbReference type="PharmGKB" id="PA134945614"/>
<dbReference type="VEuPathDB" id="HostDB:ENSG00000162073"/>
<dbReference type="eggNOG" id="KOG0748">
    <property type="taxonomic scope" value="Eukaryota"/>
</dbReference>
<dbReference type="GeneTree" id="ENSGT00940000157978"/>
<dbReference type="HOGENOM" id="CLU_023075_0_1_1"/>
<dbReference type="InParanoid" id="Q8N4S7"/>
<dbReference type="OMA" id="HHACPPD"/>
<dbReference type="OrthoDB" id="535992at2759"/>
<dbReference type="PAN-GO" id="Q8N4S7">
    <property type="GO annotations" value="1 GO annotation based on evolutionary models"/>
</dbReference>
<dbReference type="PhylomeDB" id="Q8N4S7"/>
<dbReference type="TreeFam" id="TF323692"/>
<dbReference type="PathwayCommons" id="Q8N4S7"/>
<dbReference type="SignaLink" id="Q8N4S7"/>
<dbReference type="BioGRID-ORCS" id="124222">
    <property type="hits" value="41 hits in 1160 CRISPR screens"/>
</dbReference>
<dbReference type="ChiTaRS" id="PAQR4">
    <property type="organism name" value="human"/>
</dbReference>
<dbReference type="GenomeRNAi" id="124222"/>
<dbReference type="Pharos" id="Q8N4S7">
    <property type="development level" value="Tdark"/>
</dbReference>
<dbReference type="PRO" id="PR:Q8N4S7"/>
<dbReference type="Proteomes" id="UP000005640">
    <property type="component" value="Chromosome 16"/>
</dbReference>
<dbReference type="RNAct" id="Q8N4S7">
    <property type="molecule type" value="protein"/>
</dbReference>
<dbReference type="Bgee" id="ENSG00000162073">
    <property type="expression patterns" value="Expressed in C1 segment of cervical spinal cord and 171 other cell types or tissues"/>
</dbReference>
<dbReference type="ExpressionAtlas" id="Q8N4S7">
    <property type="expression patterns" value="baseline and differential"/>
</dbReference>
<dbReference type="GO" id="GO:0000139">
    <property type="term" value="C:Golgi membrane"/>
    <property type="evidence" value="ECO:0000314"/>
    <property type="project" value="UniProtKB"/>
</dbReference>
<dbReference type="GO" id="GO:0060090">
    <property type="term" value="F:molecular adaptor activity"/>
    <property type="evidence" value="ECO:0000314"/>
    <property type="project" value="UniProtKB"/>
</dbReference>
<dbReference type="GO" id="GO:0050821">
    <property type="term" value="P:protein stabilization"/>
    <property type="evidence" value="ECO:0000314"/>
    <property type="project" value="UniProtKB"/>
</dbReference>
<dbReference type="GO" id="GO:2000303">
    <property type="term" value="P:regulation of ceramide biosynthetic process"/>
    <property type="evidence" value="ECO:0000314"/>
    <property type="project" value="UniProtKB"/>
</dbReference>
<dbReference type="InterPro" id="IPR004254">
    <property type="entry name" value="AdipoR/HlyIII-related"/>
</dbReference>
<dbReference type="PANTHER" id="PTHR20855">
    <property type="entry name" value="ADIPOR/PROGESTIN RECEPTOR-RELATED"/>
    <property type="match status" value="1"/>
</dbReference>
<dbReference type="PANTHER" id="PTHR20855:SF138">
    <property type="entry name" value="PROGESTIN AND ADIPOQ RECEPTOR FAMILY MEMBER 4"/>
    <property type="match status" value="1"/>
</dbReference>
<dbReference type="Pfam" id="PF03006">
    <property type="entry name" value="HlyIII"/>
    <property type="match status" value="1"/>
</dbReference>
<keyword id="KW-0025">Alternative splicing</keyword>
<keyword id="KW-0333">Golgi apparatus</keyword>
<keyword id="KW-0472">Membrane</keyword>
<keyword id="KW-1267">Proteomics identification</keyword>
<keyword id="KW-1185">Reference proteome</keyword>
<keyword id="KW-0812">Transmembrane</keyword>
<keyword id="KW-1133">Transmembrane helix</keyword>
<feature type="chain" id="PRO_0000218848" description="Progestin and adipoQ receptor family member 4">
    <location>
        <begin position="1"/>
        <end position="273"/>
    </location>
</feature>
<feature type="transmembrane region" description="Helical" evidence="1">
    <location>
        <begin position="52"/>
        <end position="72"/>
    </location>
</feature>
<feature type="transmembrane region" description="Helical" evidence="1">
    <location>
        <begin position="79"/>
        <end position="99"/>
    </location>
</feature>
<feature type="transmembrane region" description="Helical" evidence="1">
    <location>
        <begin position="115"/>
        <end position="135"/>
    </location>
</feature>
<feature type="transmembrane region" description="Helical" evidence="1">
    <location>
        <begin position="147"/>
        <end position="167"/>
    </location>
</feature>
<feature type="transmembrane region" description="Helical" evidence="1">
    <location>
        <begin position="185"/>
        <end position="205"/>
    </location>
</feature>
<feature type="transmembrane region" description="Helical" evidence="1">
    <location>
        <begin position="245"/>
        <end position="265"/>
    </location>
</feature>
<feature type="splice variant" id="VSP_011482" description="In isoform 3." evidence="5">
    <location>
        <begin position="56"/>
        <end position="130"/>
    </location>
</feature>
<feature type="splice variant" id="VSP_011481" description="In isoform 2." evidence="5">
    <location>
        <begin position="56"/>
        <end position="94"/>
    </location>
</feature>
<feature type="sequence conflict" description="In Ref. 2; BAC03821." evidence="7" ref="2">
    <original>T</original>
    <variation>A</variation>
    <location>
        <position position="54"/>
    </location>
</feature>
<feature type="sequence conflict" description="In Ref. 2; BAC03821." evidence="7" ref="2">
    <original>A</original>
    <variation>T</variation>
    <location>
        <position position="148"/>
    </location>
</feature>
<feature type="sequence conflict" description="In Ref. 2; BAB70758." evidence="7" ref="2">
    <original>G</original>
    <variation>E</variation>
    <location>
        <position position="189"/>
    </location>
</feature>
<accession>Q8N4S7</accession>
<accession>A8K5Q8</accession>
<accession>D3DUA2</accession>
<accession>D3DUA3</accession>
<accession>Q8NAS6</accession>
<accession>Q96NW1</accession>